<comment type="function">
    <text>GTP-binding protein that functions as an allosteric activator of the cholera toxin catalytic subunit, an ADP-ribosyltransferase. Involved in protein trafficking; may modulate vesicle budding and uncoating within the Golgi apparatus.</text>
</comment>
<comment type="subcellular location">
    <subcellularLocation>
        <location>Golgi apparatus</location>
    </subcellularLocation>
</comment>
<comment type="similarity">
    <text evidence="3">Belongs to the small GTPase superfamily. Arf family.</text>
</comment>
<organism>
    <name type="scientific">Rattus norvegicus</name>
    <name type="common">Rat</name>
    <dbReference type="NCBI Taxonomy" id="10116"/>
    <lineage>
        <taxon>Eukaryota</taxon>
        <taxon>Metazoa</taxon>
        <taxon>Chordata</taxon>
        <taxon>Craniata</taxon>
        <taxon>Vertebrata</taxon>
        <taxon>Euteleostomi</taxon>
        <taxon>Mammalia</taxon>
        <taxon>Eutheria</taxon>
        <taxon>Euarchontoglires</taxon>
        <taxon>Glires</taxon>
        <taxon>Rodentia</taxon>
        <taxon>Myomorpha</taxon>
        <taxon>Muroidea</taxon>
        <taxon>Muridae</taxon>
        <taxon>Murinae</taxon>
        <taxon>Rattus</taxon>
    </lineage>
</organism>
<reference key="1">
    <citation type="journal article" date="1996" name="Mol. Cell. Biochem.">
        <title>Interspecies relationships among ADP-ribosylation factors (ARFs): evidence of evolutionary pressure to maintain individual identities.</title>
        <authorList>
            <person name="Price S.R."/>
            <person name="Nightingale M.S."/>
            <person name="Tsuchiya M."/>
            <person name="Moss J."/>
            <person name="Vaughan M."/>
        </authorList>
    </citation>
    <scope>NUCLEOTIDE SEQUENCE [MRNA]</scope>
    <source>
        <tissue>Brain</tissue>
    </source>
</reference>
<reference key="2">
    <citation type="journal article" date="2004" name="Genome Res.">
        <title>The status, quality, and expansion of the NIH full-length cDNA project: the Mammalian Gene Collection (MGC).</title>
        <authorList>
            <consortium name="The MGC Project Team"/>
        </authorList>
    </citation>
    <scope>NUCLEOTIDE SEQUENCE [LARGE SCALE MRNA]</scope>
    <source>
        <tissue>Placenta</tissue>
    </source>
</reference>
<name>ARF2_RAT</name>
<sequence length="181" mass="20746">MGNVFEKLFKSLFGKKEMRILMVGLDAAGKTTILYKLKLGEIVTTIPTIGFNVETVEYKNISFTVWDVGGQDKIRPLWRHYFQNTQGLIFVVDSNDRERVNEAREELTRMLAEDELRDAVLLVFVNKQDLPNAMNAAEITDKLGLHSLRQRNWYIQATCATSGDGLYEGLDWLSNQLKNQK</sequence>
<gene>
    <name type="primary">Arf2</name>
</gene>
<accession>P84082</accession>
<accession>P10947</accession>
<accession>P16500</accession>
<accession>Q4KM00</accession>
<proteinExistence type="evidence at transcript level"/>
<dbReference type="EMBL" id="L12381">
    <property type="protein sequence ID" value="AAA40686.1"/>
    <property type="molecule type" value="mRNA"/>
</dbReference>
<dbReference type="EMBL" id="BC098915">
    <property type="protein sequence ID" value="AAH98915.1"/>
    <property type="molecule type" value="mRNA"/>
</dbReference>
<dbReference type="RefSeq" id="NP_077064.1">
    <property type="nucleotide sequence ID" value="NM_024150.3"/>
</dbReference>
<dbReference type="RefSeq" id="XP_038942837.1">
    <property type="nucleotide sequence ID" value="XM_039086909.2"/>
</dbReference>
<dbReference type="SMR" id="P84082"/>
<dbReference type="BioGRID" id="249403">
    <property type="interactions" value="3"/>
</dbReference>
<dbReference type="FunCoup" id="P84082">
    <property type="interactions" value="1174"/>
</dbReference>
<dbReference type="IntAct" id="P84082">
    <property type="interactions" value="2"/>
</dbReference>
<dbReference type="MINT" id="P84082"/>
<dbReference type="STRING" id="10116.ENSRNOP00000006483"/>
<dbReference type="iPTMnet" id="P84082"/>
<dbReference type="PhosphoSitePlus" id="P84082"/>
<dbReference type="jPOST" id="P84082"/>
<dbReference type="PaxDb" id="10116-ENSRNOP00000006483"/>
<dbReference type="Ensembl" id="ENSRNOT00000006483.6">
    <property type="protein sequence ID" value="ENSRNOP00000006483.4"/>
    <property type="gene ID" value="ENSRNOG00000004807.7"/>
</dbReference>
<dbReference type="GeneID" id="79119"/>
<dbReference type="KEGG" id="rno:79119"/>
<dbReference type="UCSC" id="RGD:621271">
    <property type="organism name" value="rat"/>
</dbReference>
<dbReference type="AGR" id="RGD:621271"/>
<dbReference type="CTD" id="11841"/>
<dbReference type="RGD" id="621271">
    <property type="gene designation" value="Arf2"/>
</dbReference>
<dbReference type="eggNOG" id="KOG0070">
    <property type="taxonomic scope" value="Eukaryota"/>
</dbReference>
<dbReference type="GeneTree" id="ENSGT00950000183080"/>
<dbReference type="HOGENOM" id="CLU_040729_9_3_1"/>
<dbReference type="InParanoid" id="P84082"/>
<dbReference type="OrthoDB" id="2011769at2759"/>
<dbReference type="PhylomeDB" id="P84082"/>
<dbReference type="TreeFam" id="TF300808"/>
<dbReference type="PRO" id="PR:P84082"/>
<dbReference type="Proteomes" id="UP000002494">
    <property type="component" value="Chromosome 10"/>
</dbReference>
<dbReference type="Bgee" id="ENSRNOG00000004807">
    <property type="expression patterns" value="Expressed in heart and 20 other cell types or tissues"/>
</dbReference>
<dbReference type="GO" id="GO:0005737">
    <property type="term" value="C:cytoplasm"/>
    <property type="evidence" value="ECO:0000318"/>
    <property type="project" value="GO_Central"/>
</dbReference>
<dbReference type="GO" id="GO:0005794">
    <property type="term" value="C:Golgi apparatus"/>
    <property type="evidence" value="ECO:0000250"/>
    <property type="project" value="UniProtKB"/>
</dbReference>
<dbReference type="GO" id="GO:0005886">
    <property type="term" value="C:plasma membrane"/>
    <property type="evidence" value="ECO:0000318"/>
    <property type="project" value="GO_Central"/>
</dbReference>
<dbReference type="GO" id="GO:0005525">
    <property type="term" value="F:GTP binding"/>
    <property type="evidence" value="ECO:0000318"/>
    <property type="project" value="GO_Central"/>
</dbReference>
<dbReference type="GO" id="GO:0003924">
    <property type="term" value="F:GTPase activity"/>
    <property type="evidence" value="ECO:0007669"/>
    <property type="project" value="InterPro"/>
</dbReference>
<dbReference type="GO" id="GO:0006886">
    <property type="term" value="P:intracellular protein transport"/>
    <property type="evidence" value="ECO:0000318"/>
    <property type="project" value="GO_Central"/>
</dbReference>
<dbReference type="GO" id="GO:0016192">
    <property type="term" value="P:vesicle-mediated transport"/>
    <property type="evidence" value="ECO:0000318"/>
    <property type="project" value="GO_Central"/>
</dbReference>
<dbReference type="CDD" id="cd04150">
    <property type="entry name" value="Arf1_5_like"/>
    <property type="match status" value="1"/>
</dbReference>
<dbReference type="FunFam" id="3.40.50.300:FF:003500">
    <property type="entry name" value="ADP-ribosylation factor 1"/>
    <property type="match status" value="1"/>
</dbReference>
<dbReference type="Gene3D" id="3.40.50.300">
    <property type="entry name" value="P-loop containing nucleotide triphosphate hydrolases"/>
    <property type="match status" value="1"/>
</dbReference>
<dbReference type="InterPro" id="IPR045872">
    <property type="entry name" value="Arf1-5-like"/>
</dbReference>
<dbReference type="InterPro" id="IPR027417">
    <property type="entry name" value="P-loop_NTPase"/>
</dbReference>
<dbReference type="InterPro" id="IPR005225">
    <property type="entry name" value="Small_GTP-bd"/>
</dbReference>
<dbReference type="InterPro" id="IPR024156">
    <property type="entry name" value="Small_GTPase_ARF"/>
</dbReference>
<dbReference type="InterPro" id="IPR006689">
    <property type="entry name" value="Small_GTPase_ARF/SAR"/>
</dbReference>
<dbReference type="NCBIfam" id="TIGR00231">
    <property type="entry name" value="small_GTP"/>
    <property type="match status" value="1"/>
</dbReference>
<dbReference type="PANTHER" id="PTHR11711">
    <property type="entry name" value="ADP RIBOSYLATION FACTOR-RELATED"/>
    <property type="match status" value="1"/>
</dbReference>
<dbReference type="Pfam" id="PF00025">
    <property type="entry name" value="Arf"/>
    <property type="match status" value="1"/>
</dbReference>
<dbReference type="PRINTS" id="PR00328">
    <property type="entry name" value="SAR1GTPBP"/>
</dbReference>
<dbReference type="SMART" id="SM00177">
    <property type="entry name" value="ARF"/>
    <property type="match status" value="1"/>
</dbReference>
<dbReference type="SMART" id="SM00175">
    <property type="entry name" value="RAB"/>
    <property type="match status" value="1"/>
</dbReference>
<dbReference type="SMART" id="SM00178">
    <property type="entry name" value="SAR"/>
    <property type="match status" value="1"/>
</dbReference>
<dbReference type="SUPFAM" id="SSF52540">
    <property type="entry name" value="P-loop containing nucleoside triphosphate hydrolases"/>
    <property type="match status" value="1"/>
</dbReference>
<dbReference type="PROSITE" id="PS51417">
    <property type="entry name" value="ARF"/>
    <property type="match status" value="1"/>
</dbReference>
<protein>
    <recommendedName>
        <fullName>ADP-ribosylation factor 2</fullName>
    </recommendedName>
</protein>
<keyword id="KW-0931">ER-Golgi transport</keyword>
<keyword id="KW-0333">Golgi apparatus</keyword>
<keyword id="KW-0342">GTP-binding</keyword>
<keyword id="KW-0449">Lipoprotein</keyword>
<keyword id="KW-0519">Myristate</keyword>
<keyword id="KW-0547">Nucleotide-binding</keyword>
<keyword id="KW-0653">Protein transport</keyword>
<keyword id="KW-1185">Reference proteome</keyword>
<keyword id="KW-0813">Transport</keyword>
<evidence type="ECO:0000250" key="1"/>
<evidence type="ECO:0000255" key="2"/>
<evidence type="ECO:0000305" key="3"/>
<feature type="initiator methionine" description="Removed" evidence="2">
    <location>
        <position position="1"/>
    </location>
</feature>
<feature type="chain" id="PRO_0000207385" description="ADP-ribosylation factor 2">
    <location>
        <begin position="2"/>
        <end position="181"/>
    </location>
</feature>
<feature type="binding site" evidence="1">
    <location>
        <begin position="24"/>
        <end position="31"/>
    </location>
    <ligand>
        <name>GTP</name>
        <dbReference type="ChEBI" id="CHEBI:37565"/>
    </ligand>
</feature>
<feature type="binding site" evidence="1">
    <location>
        <begin position="67"/>
        <end position="71"/>
    </location>
    <ligand>
        <name>GTP</name>
        <dbReference type="ChEBI" id="CHEBI:37565"/>
    </ligand>
</feature>
<feature type="binding site" evidence="1">
    <location>
        <begin position="126"/>
        <end position="129"/>
    </location>
    <ligand>
        <name>GTP</name>
        <dbReference type="ChEBI" id="CHEBI:37565"/>
    </ligand>
</feature>
<feature type="lipid moiety-binding region" description="N-myristoyl glycine" evidence="2">
    <location>
        <position position="2"/>
    </location>
</feature>